<name>Y2054_LISMO</name>
<comment type="subcellular location">
    <subcellularLocation>
        <location evidence="1">Cytoplasm</location>
    </subcellularLocation>
</comment>
<comment type="similarity">
    <text evidence="1">Belongs to the UPF0298 family.</text>
</comment>
<proteinExistence type="inferred from homology"/>
<organism>
    <name type="scientific">Listeria monocytogenes serovar 1/2a (strain ATCC BAA-679 / EGD-e)</name>
    <dbReference type="NCBI Taxonomy" id="169963"/>
    <lineage>
        <taxon>Bacteria</taxon>
        <taxon>Bacillati</taxon>
        <taxon>Bacillota</taxon>
        <taxon>Bacilli</taxon>
        <taxon>Bacillales</taxon>
        <taxon>Listeriaceae</taxon>
        <taxon>Listeria</taxon>
    </lineage>
</organism>
<sequence>MENDRQAIVVWMNHLKQVRSLKRFGNVHYVSRKLKYAVLYCDMAEVEDISNKVSRFHYVKRVEMSFRPFLKTEYESKKEMMYEHKNEDVQISI</sequence>
<evidence type="ECO:0000255" key="1">
    <source>
        <dbReference type="HAMAP-Rule" id="MF_01126"/>
    </source>
</evidence>
<dbReference type="EMBL" id="AL591982">
    <property type="protein sequence ID" value="CAD00132.1"/>
    <property type="molecule type" value="Genomic_DNA"/>
</dbReference>
<dbReference type="PIR" id="AF1331">
    <property type="entry name" value="AF1331"/>
</dbReference>
<dbReference type="RefSeq" id="NP_465578.1">
    <property type="nucleotide sequence ID" value="NC_003210.1"/>
</dbReference>
<dbReference type="RefSeq" id="WP_003726138.1">
    <property type="nucleotide sequence ID" value="NZ_CP149495.1"/>
</dbReference>
<dbReference type="SMR" id="P60415"/>
<dbReference type="STRING" id="169963.gene:17594739"/>
<dbReference type="PaxDb" id="169963-lmo2054"/>
<dbReference type="EnsemblBacteria" id="CAD00132">
    <property type="protein sequence ID" value="CAD00132"/>
    <property type="gene ID" value="CAD00132"/>
</dbReference>
<dbReference type="GeneID" id="984727"/>
<dbReference type="KEGG" id="lmo:lmo2054"/>
<dbReference type="PATRIC" id="fig|169963.11.peg.2102"/>
<dbReference type="eggNOG" id="COG4471">
    <property type="taxonomic scope" value="Bacteria"/>
</dbReference>
<dbReference type="HOGENOM" id="CLU_159890_2_0_9"/>
<dbReference type="OrthoDB" id="2990788at2"/>
<dbReference type="PhylomeDB" id="P60415"/>
<dbReference type="BioCyc" id="LMON169963:LMO2054-MONOMER"/>
<dbReference type="Proteomes" id="UP000000817">
    <property type="component" value="Chromosome"/>
</dbReference>
<dbReference type="GO" id="GO:0005737">
    <property type="term" value="C:cytoplasm"/>
    <property type="evidence" value="ECO:0007669"/>
    <property type="project" value="UniProtKB-SubCell"/>
</dbReference>
<dbReference type="HAMAP" id="MF_01126">
    <property type="entry name" value="UPF0298"/>
    <property type="match status" value="1"/>
</dbReference>
<dbReference type="InterPro" id="IPR016979">
    <property type="entry name" value="DUF2129"/>
</dbReference>
<dbReference type="NCBIfam" id="NF002777">
    <property type="entry name" value="PRK02886.1"/>
    <property type="match status" value="1"/>
</dbReference>
<dbReference type="Pfam" id="PF09902">
    <property type="entry name" value="DUF2129"/>
    <property type="match status" value="1"/>
</dbReference>
<dbReference type="PIRSF" id="PIRSF031653">
    <property type="entry name" value="UCP031653"/>
    <property type="match status" value="1"/>
</dbReference>
<keyword id="KW-0963">Cytoplasm</keyword>
<keyword id="KW-1185">Reference proteome</keyword>
<gene>
    <name type="ordered locus">lmo2054</name>
</gene>
<accession>P60415</accession>
<accession>Q929W3</accession>
<reference key="1">
    <citation type="journal article" date="2001" name="Science">
        <title>Comparative genomics of Listeria species.</title>
        <authorList>
            <person name="Glaser P."/>
            <person name="Frangeul L."/>
            <person name="Buchrieser C."/>
            <person name="Rusniok C."/>
            <person name="Amend A."/>
            <person name="Baquero F."/>
            <person name="Berche P."/>
            <person name="Bloecker H."/>
            <person name="Brandt P."/>
            <person name="Chakraborty T."/>
            <person name="Charbit A."/>
            <person name="Chetouani F."/>
            <person name="Couve E."/>
            <person name="de Daruvar A."/>
            <person name="Dehoux P."/>
            <person name="Domann E."/>
            <person name="Dominguez-Bernal G."/>
            <person name="Duchaud E."/>
            <person name="Durant L."/>
            <person name="Dussurget O."/>
            <person name="Entian K.-D."/>
            <person name="Fsihi H."/>
            <person name="Garcia-del Portillo F."/>
            <person name="Garrido P."/>
            <person name="Gautier L."/>
            <person name="Goebel W."/>
            <person name="Gomez-Lopez N."/>
            <person name="Hain T."/>
            <person name="Hauf J."/>
            <person name="Jackson D."/>
            <person name="Jones L.-M."/>
            <person name="Kaerst U."/>
            <person name="Kreft J."/>
            <person name="Kuhn M."/>
            <person name="Kunst F."/>
            <person name="Kurapkat G."/>
            <person name="Madueno E."/>
            <person name="Maitournam A."/>
            <person name="Mata Vicente J."/>
            <person name="Ng E."/>
            <person name="Nedjari H."/>
            <person name="Nordsiek G."/>
            <person name="Novella S."/>
            <person name="de Pablos B."/>
            <person name="Perez-Diaz J.-C."/>
            <person name="Purcell R."/>
            <person name="Remmel B."/>
            <person name="Rose M."/>
            <person name="Schlueter T."/>
            <person name="Simoes N."/>
            <person name="Tierrez A."/>
            <person name="Vazquez-Boland J.-A."/>
            <person name="Voss H."/>
            <person name="Wehland J."/>
            <person name="Cossart P."/>
        </authorList>
    </citation>
    <scope>NUCLEOTIDE SEQUENCE [LARGE SCALE GENOMIC DNA]</scope>
    <source>
        <strain>ATCC BAA-679 / EGD-e</strain>
    </source>
</reference>
<feature type="chain" id="PRO_0000074662" description="UPF0298 protein lmo2054">
    <location>
        <begin position="1"/>
        <end position="93"/>
    </location>
</feature>
<protein>
    <recommendedName>
        <fullName evidence="1">UPF0298 protein lmo2054</fullName>
    </recommendedName>
</protein>